<comment type="function">
    <text evidence="4 5 6 8 9 10">Transcription factor that affects the expression of a large set of genes. Recognizes and binds to the consensus sequence 5'-[CAT]AGG[TC]A-3' in the promoter region. Plays a major role in the repression of a specific subset of hypoxic genes (e.g. ANB1, DAN1 and HEM13) under aerobic conditions. Acts synergistically with the transcription factor ROX1 to recruit the general repression complex SSN6-TUP1 to the promoter of hypoxic genes. Represses transcription of ergosterol biosynthetic genes. Negatively regulates pheromone-induced gene expression. Can act as a transcriptional activator (e.g. of genes like CYC1, SUC2 and the Ty long terminal repeat delta promoter).</text>
</comment>
<comment type="subcellular location">
    <subcellularLocation>
        <location evidence="10">Nucleus</location>
    </subcellularLocation>
</comment>
<comment type="induction">
    <text evidence="6">Induced under aerobic conditions and repressed under anaerobic conditions.</text>
</comment>
<comment type="domain">
    <text evidence="1">The prion domain (PrD) is a Gln/Asn (Q/N)-rich domain, which is unstructured in its native, soluble form, and which forms a parallel in-register beta-sheet in its amyloid form.</text>
</comment>
<comment type="miscellaneous">
    <text evidence="11">[MOT3+] is the prion form of MOT3. [MOT3+] is the result of a conformational change of the cellular MOT3 protein that becomes self-propagating and infectious. This conformational change generates a form of MOT3 that assembles into amyloid fibrils. [MOT3+]-aggregates sequester soluble MOT3, resulting in a loss-of-function phenotype for MOT3. [MOT3+] can be cured by GdnHCl and by inactivation of the molecular chaperone HSP104, which is required for [MOT3+] propagation. It is speculated that prion properties of transcription factors may generate an optimized phenotypic heterogeneity that buffers yeast populations against diverse environmental insults.</text>
</comment>
<comment type="miscellaneous">
    <text evidence="7">Present with 1690 molecules/cell in log phase SD medium.</text>
</comment>
<keyword id="KW-0007">Acetylation</keyword>
<keyword id="KW-0010">Activator</keyword>
<keyword id="KW-0034">Amyloid</keyword>
<keyword id="KW-0479">Metal-binding</keyword>
<keyword id="KW-0539">Nucleus</keyword>
<keyword id="KW-0640">Prion</keyword>
<keyword id="KW-1185">Reference proteome</keyword>
<keyword id="KW-0677">Repeat</keyword>
<keyword id="KW-0678">Repressor</keyword>
<keyword id="KW-0804">Transcription</keyword>
<keyword id="KW-0805">Transcription regulation</keyword>
<keyword id="KW-0862">Zinc</keyword>
<keyword id="KW-0863">Zinc-finger</keyword>
<organism>
    <name type="scientific">Saccharomyces cerevisiae (strain ATCC 204508 / S288c)</name>
    <name type="common">Baker's yeast</name>
    <dbReference type="NCBI Taxonomy" id="559292"/>
    <lineage>
        <taxon>Eukaryota</taxon>
        <taxon>Fungi</taxon>
        <taxon>Dikarya</taxon>
        <taxon>Ascomycota</taxon>
        <taxon>Saccharomycotina</taxon>
        <taxon>Saccharomycetes</taxon>
        <taxon>Saccharomycetales</taxon>
        <taxon>Saccharomycetaceae</taxon>
        <taxon>Saccharomyces</taxon>
    </lineage>
</organism>
<reference key="1">
    <citation type="journal article" date="1998" name="Mol. Cell. Biol.">
        <title>Identification and analysis of Mot3, a zinc finger protein that binds to the retrotransposon Ty long terminal repeat (delta) in Saccharomyces cerevisiae.</title>
        <authorList>
            <person name="Madison J.M."/>
            <person name="Dudley A.M."/>
            <person name="Winston F."/>
        </authorList>
    </citation>
    <scope>NUCLEOTIDE SEQUENCE [GENOMIC DNA]</scope>
    <scope>FUNCTION</scope>
    <scope>DNA-BINDING</scope>
    <source>
        <strain>ATCC 204508 / S288c</strain>
    </source>
</reference>
<reference key="2">
    <citation type="journal article" date="1997" name="Nature">
        <title>The nucleotide sequence of Saccharomyces cerevisiae chromosome XIII.</title>
        <authorList>
            <person name="Bowman S."/>
            <person name="Churcher C.M."/>
            <person name="Badcock K."/>
            <person name="Brown D."/>
            <person name="Chillingworth T."/>
            <person name="Connor R."/>
            <person name="Dedman K."/>
            <person name="Devlin K."/>
            <person name="Gentles S."/>
            <person name="Hamlin N."/>
            <person name="Hunt S."/>
            <person name="Jagels K."/>
            <person name="Lye G."/>
            <person name="Moule S."/>
            <person name="Odell C."/>
            <person name="Pearson D."/>
            <person name="Rajandream M.A."/>
            <person name="Rice P."/>
            <person name="Skelton J."/>
            <person name="Walsh S.V."/>
            <person name="Whitehead S."/>
            <person name="Barrell B.G."/>
        </authorList>
    </citation>
    <scope>NUCLEOTIDE SEQUENCE [LARGE SCALE GENOMIC DNA]</scope>
    <source>
        <strain>ATCC 204508 / S288c</strain>
    </source>
</reference>
<reference key="3">
    <citation type="journal article" date="2014" name="G3 (Bethesda)">
        <title>The reference genome sequence of Saccharomyces cerevisiae: Then and now.</title>
        <authorList>
            <person name="Engel S.R."/>
            <person name="Dietrich F.S."/>
            <person name="Fisk D.G."/>
            <person name="Binkley G."/>
            <person name="Balakrishnan R."/>
            <person name="Costanzo M.C."/>
            <person name="Dwight S.S."/>
            <person name="Hitz B.C."/>
            <person name="Karra K."/>
            <person name="Nash R.S."/>
            <person name="Weng S."/>
            <person name="Wong E.D."/>
            <person name="Lloyd P."/>
            <person name="Skrzypek M.S."/>
            <person name="Miyasato S.R."/>
            <person name="Simison M."/>
            <person name="Cherry J.M."/>
        </authorList>
    </citation>
    <scope>GENOME REANNOTATION</scope>
    <source>
        <strain>ATCC 204508 / S288c</strain>
    </source>
</reference>
<reference key="4">
    <citation type="journal article" date="2007" name="Genome Res.">
        <title>Approaching a complete repository of sequence-verified protein-encoding clones for Saccharomyces cerevisiae.</title>
        <authorList>
            <person name="Hu Y."/>
            <person name="Rolfs A."/>
            <person name="Bhullar B."/>
            <person name="Murthy T.V.S."/>
            <person name="Zhu C."/>
            <person name="Berger M.F."/>
            <person name="Camargo A.A."/>
            <person name="Kelley F."/>
            <person name="McCarron S."/>
            <person name="Jepson D."/>
            <person name="Richardson A."/>
            <person name="Raphael J."/>
            <person name="Moreira D."/>
            <person name="Taycher E."/>
            <person name="Zuo D."/>
            <person name="Mohr S."/>
            <person name="Kane M.F."/>
            <person name="Williamson J."/>
            <person name="Simpson A.J.G."/>
            <person name="Bulyk M.L."/>
            <person name="Harlow E."/>
            <person name="Marsischky G."/>
            <person name="Kolodner R.D."/>
            <person name="LaBaer J."/>
        </authorList>
    </citation>
    <scope>NUCLEOTIDE SEQUENCE [GENOMIC DNA]</scope>
    <source>
        <strain>ATCC 204508 / S288c</strain>
    </source>
</reference>
<reference key="5">
    <citation type="journal article" date="1998" name="Genetics">
        <title>Mot3, a Zn finger transcription factor that modulates gene expression and attenuates mating pheromone signaling in Saccharomyces cerevisiae.</title>
        <authorList>
            <person name="Grishin A.V."/>
            <person name="Rothenberg M."/>
            <person name="Downs M.A."/>
            <person name="Blumer K.J."/>
        </authorList>
    </citation>
    <scope>FUNCTION IN TRANSCRIPTIONAL ACTIVATION</scope>
    <scope>DNA-BINDING</scope>
    <scope>SUBCELLULAR LOCATION</scope>
</reference>
<reference key="6">
    <citation type="journal article" date="2000" name="Mol. Cell. Biol.">
        <title>Roles of transcription factor Mot3 and chromatin in repression of the hypoxic gene ANB1 in yeast.</title>
        <authorList>
            <person name="Kastaniotis A.J."/>
            <person name="Mennella T.A."/>
            <person name="Konrad C."/>
            <person name="Rodriguez Torres A.M."/>
            <person name="Zitomer R.S."/>
        </authorList>
    </citation>
    <scope>FUNCTION</scope>
</reference>
<reference key="7">
    <citation type="journal article" date="2002" name="EMBO J.">
        <title>Mot3 is a transcriptional repressor of ergosterol biosynthetic genes and is required for normal vacuolar function in Saccharomyces cerevisiae.</title>
        <authorList>
            <person name="Hongay C."/>
            <person name="Jia N."/>
            <person name="Bard M."/>
            <person name="Winston F."/>
        </authorList>
    </citation>
    <scope>FUNCTION IN TRANSCRIPTIONAL REPRESSION</scope>
</reference>
<reference key="8">
    <citation type="journal article" date="2003" name="Nature">
        <title>Global analysis of protein expression in yeast.</title>
        <authorList>
            <person name="Ghaemmaghami S."/>
            <person name="Huh W.-K."/>
            <person name="Bower K."/>
            <person name="Howson R.W."/>
            <person name="Belle A."/>
            <person name="Dephoure N."/>
            <person name="O'Shea E.K."/>
            <person name="Weissman J.S."/>
        </authorList>
    </citation>
    <scope>LEVEL OF PROTEIN EXPRESSION [LARGE SCALE ANALYSIS]</scope>
</reference>
<reference key="9">
    <citation type="journal article" date="2003" name="Nucleic Acids Res.">
        <title>Synergistic repression of anaerobic genes by Mot3 and Rox1 in Saccharomyces cerevisiae.</title>
        <authorList>
            <person name="Sertil O."/>
            <person name="Kapoor R."/>
            <person name="Cohen B.D."/>
            <person name="Abramova N."/>
            <person name="Lowry C.V."/>
        </authorList>
    </citation>
    <scope>FUNCTION IN REPRESSION OF HYPOXIC GENES</scope>
    <scope>INDUCTION</scope>
</reference>
<reference key="10">
    <citation type="journal article" date="2005" name="Eukaryot. Cell">
        <title>Combinatorial repression of the hypoxic genes of Saccharomyces cerevisiae by DNA binding proteins Rox1 and Mot3.</title>
        <authorList>
            <person name="Klinkenberg L.G."/>
            <person name="Mennella T.A."/>
            <person name="Luetkenhaus K."/>
            <person name="Zitomer R.S."/>
        </authorList>
    </citation>
    <scope>FUNCTION</scope>
</reference>
<reference key="11">
    <citation type="journal article" date="2009" name="Cell">
        <title>A systematic survey identifies prions and illuminates sequence features of prionogenic proteins.</title>
        <authorList>
            <person name="Alberti S."/>
            <person name="Halfmann R."/>
            <person name="King O."/>
            <person name="Kapila A."/>
            <person name="Lindquist S."/>
        </authorList>
    </citation>
    <scope>PRION FORMATION</scope>
</reference>
<reference key="12">
    <citation type="journal article" date="2012" name="Proc. Natl. Acad. Sci. U.S.A.">
        <title>N-terminal acetylome analyses and functional insights of the N-terminal acetyltransferase NatB.</title>
        <authorList>
            <person name="Van Damme P."/>
            <person name="Lasa M."/>
            <person name="Polevoda B."/>
            <person name="Gazquez C."/>
            <person name="Elosegui-Artola A."/>
            <person name="Kim D.S."/>
            <person name="De Juan-Pardo E."/>
            <person name="Demeyer K."/>
            <person name="Hole K."/>
            <person name="Larrea E."/>
            <person name="Timmerman E."/>
            <person name="Prieto J."/>
            <person name="Arnesen T."/>
            <person name="Sherman F."/>
            <person name="Gevaert K."/>
            <person name="Aldabe R."/>
        </authorList>
    </citation>
    <scope>ACETYLATION [LARGE SCALE ANALYSIS] AT MET-1</scope>
    <scope>IDENTIFICATION BY MASS SPECTROMETRY [LARGE SCALE ANALYSIS]</scope>
</reference>
<accession>P54785</accession>
<accession>D6VZP4</accession>
<dbReference type="EMBL" id="U25279">
    <property type="protein sequence ID" value="AAC49982.1"/>
    <property type="molecule type" value="Genomic_DNA"/>
</dbReference>
<dbReference type="EMBL" id="Z48952">
    <property type="protein sequence ID" value="CAA88795.1"/>
    <property type="molecule type" value="Genomic_DNA"/>
</dbReference>
<dbReference type="EMBL" id="AY693209">
    <property type="protein sequence ID" value="AAT93228.1"/>
    <property type="molecule type" value="Genomic_DNA"/>
</dbReference>
<dbReference type="EMBL" id="BK006946">
    <property type="protein sequence ID" value="DAA09968.1"/>
    <property type="molecule type" value="Genomic_DNA"/>
</dbReference>
<dbReference type="PIR" id="S52830">
    <property type="entry name" value="S52830"/>
</dbReference>
<dbReference type="RefSeq" id="NP_013786.1">
    <property type="nucleotide sequence ID" value="NM_001182568.1"/>
</dbReference>
<dbReference type="BioGRID" id="35245">
    <property type="interactions" value="336"/>
</dbReference>
<dbReference type="FunCoup" id="P54785">
    <property type="interactions" value="967"/>
</dbReference>
<dbReference type="IntAct" id="P54785">
    <property type="interactions" value="34"/>
</dbReference>
<dbReference type="MINT" id="P54785"/>
<dbReference type="STRING" id="4932.YMR070W"/>
<dbReference type="iPTMnet" id="P54785"/>
<dbReference type="PaxDb" id="4932-YMR070W"/>
<dbReference type="PeptideAtlas" id="P54785"/>
<dbReference type="EnsemblFungi" id="YMR070W_mRNA">
    <property type="protein sequence ID" value="YMR070W"/>
    <property type="gene ID" value="YMR070W"/>
</dbReference>
<dbReference type="GeneID" id="855092"/>
<dbReference type="KEGG" id="sce:YMR070W"/>
<dbReference type="AGR" id="SGD:S000004674"/>
<dbReference type="SGD" id="S000004674">
    <property type="gene designation" value="MOT3"/>
</dbReference>
<dbReference type="VEuPathDB" id="FungiDB:YMR070W"/>
<dbReference type="eggNOG" id="KOG1721">
    <property type="taxonomic scope" value="Eukaryota"/>
</dbReference>
<dbReference type="HOGENOM" id="CLU_562847_0_0_1"/>
<dbReference type="InParanoid" id="P54785"/>
<dbReference type="OMA" id="KINTMPQ"/>
<dbReference type="OrthoDB" id="654211at2759"/>
<dbReference type="BioCyc" id="YEAST:G3O-32772-MONOMER"/>
<dbReference type="BioGRID-ORCS" id="855092">
    <property type="hits" value="7 hits in 13 CRISPR screens"/>
</dbReference>
<dbReference type="CD-CODE" id="67785C55">
    <property type="entry name" value="Hypersomatic shock foci"/>
</dbReference>
<dbReference type="PRO" id="PR:P54785"/>
<dbReference type="Proteomes" id="UP000002311">
    <property type="component" value="Chromosome XIII"/>
</dbReference>
<dbReference type="RNAct" id="P54785">
    <property type="molecule type" value="protein"/>
</dbReference>
<dbReference type="GO" id="GO:0000785">
    <property type="term" value="C:chromatin"/>
    <property type="evidence" value="ECO:0000318"/>
    <property type="project" value="GO_Central"/>
</dbReference>
<dbReference type="GO" id="GO:0005829">
    <property type="term" value="C:cytosol"/>
    <property type="evidence" value="ECO:0000314"/>
    <property type="project" value="SGD"/>
</dbReference>
<dbReference type="GO" id="GO:0005634">
    <property type="term" value="C:nucleus"/>
    <property type="evidence" value="ECO:0000314"/>
    <property type="project" value="SGD"/>
</dbReference>
<dbReference type="GO" id="GO:0000981">
    <property type="term" value="F:DNA-binding transcription factor activity, RNA polymerase II-specific"/>
    <property type="evidence" value="ECO:0000314"/>
    <property type="project" value="SGD"/>
</dbReference>
<dbReference type="GO" id="GO:0000978">
    <property type="term" value="F:RNA polymerase II cis-regulatory region sequence-specific DNA binding"/>
    <property type="evidence" value="ECO:0000314"/>
    <property type="project" value="SGD"/>
</dbReference>
<dbReference type="GO" id="GO:0061629">
    <property type="term" value="F:RNA polymerase II-specific DNA-binding transcription factor binding"/>
    <property type="evidence" value="ECO:0000315"/>
    <property type="project" value="SGD"/>
</dbReference>
<dbReference type="GO" id="GO:0008270">
    <property type="term" value="F:zinc ion binding"/>
    <property type="evidence" value="ECO:0007669"/>
    <property type="project" value="UniProtKB-KW"/>
</dbReference>
<dbReference type="GO" id="GO:0071474">
    <property type="term" value="P:cellular hyperosmotic response"/>
    <property type="evidence" value="ECO:0000315"/>
    <property type="project" value="SGD"/>
</dbReference>
<dbReference type="GO" id="GO:0071470">
    <property type="term" value="P:cellular response to osmotic stress"/>
    <property type="evidence" value="ECO:0000315"/>
    <property type="project" value="SGD"/>
</dbReference>
<dbReference type="GO" id="GO:0010895">
    <property type="term" value="P:negative regulation of ergosterol biosynthetic process"/>
    <property type="evidence" value="ECO:0000315"/>
    <property type="project" value="SGD"/>
</dbReference>
<dbReference type="GO" id="GO:0000122">
    <property type="term" value="P:negative regulation of transcription by RNA polymerase II"/>
    <property type="evidence" value="ECO:0000315"/>
    <property type="project" value="SGD"/>
</dbReference>
<dbReference type="GO" id="GO:0045944">
    <property type="term" value="P:positive regulation of transcription by RNA polymerase II"/>
    <property type="evidence" value="ECO:0000315"/>
    <property type="project" value="SGD"/>
</dbReference>
<dbReference type="GO" id="GO:0006357">
    <property type="term" value="P:regulation of transcription by RNA polymerase II"/>
    <property type="evidence" value="ECO:0000318"/>
    <property type="project" value="GO_Central"/>
</dbReference>
<dbReference type="FunFam" id="3.30.160.60:FF:002538">
    <property type="entry name" value="Mot3p"/>
    <property type="match status" value="1"/>
</dbReference>
<dbReference type="Gene3D" id="3.30.160.60">
    <property type="entry name" value="Classic Zinc Finger"/>
    <property type="match status" value="1"/>
</dbReference>
<dbReference type="InterPro" id="IPR036236">
    <property type="entry name" value="Znf_C2H2_sf"/>
</dbReference>
<dbReference type="InterPro" id="IPR013087">
    <property type="entry name" value="Znf_C2H2_type"/>
</dbReference>
<dbReference type="PANTHER" id="PTHR20916">
    <property type="entry name" value="CYSTEINE AND GLYCINE-RICH PROTEIN 2 BINDING PROTEIN"/>
    <property type="match status" value="1"/>
</dbReference>
<dbReference type="PANTHER" id="PTHR20916:SF18">
    <property type="entry name" value="IPT_TIG DOMAIN-CONTAINING PROTEIN"/>
    <property type="match status" value="1"/>
</dbReference>
<dbReference type="SMART" id="SM00355">
    <property type="entry name" value="ZnF_C2H2"/>
    <property type="match status" value="2"/>
</dbReference>
<dbReference type="SUPFAM" id="SSF57667">
    <property type="entry name" value="beta-beta-alpha zinc fingers"/>
    <property type="match status" value="1"/>
</dbReference>
<dbReference type="PROSITE" id="PS00028">
    <property type="entry name" value="ZINC_FINGER_C2H2_1"/>
    <property type="match status" value="1"/>
</dbReference>
<dbReference type="PROSITE" id="PS50157">
    <property type="entry name" value="ZINC_FINGER_C2H2_2"/>
    <property type="match status" value="1"/>
</dbReference>
<protein>
    <recommendedName>
        <fullName>Transcriptional activator/repressor MOT3</fullName>
    </recommendedName>
    <alternativeName>
        <fullName>Hypoxic gene repressor protein 7</fullName>
    </alternativeName>
    <alternativeName>
        <fullName>Modulator of transcription protein 3</fullName>
    </alternativeName>
</protein>
<proteinExistence type="evidence at protein level"/>
<evidence type="ECO:0000250" key="1"/>
<evidence type="ECO:0000255" key="2">
    <source>
        <dbReference type="PROSITE-ProRule" id="PRU00042"/>
    </source>
</evidence>
<evidence type="ECO:0000256" key="3">
    <source>
        <dbReference type="SAM" id="MobiDB-lite"/>
    </source>
</evidence>
<evidence type="ECO:0000269" key="4">
    <source>
    </source>
</evidence>
<evidence type="ECO:0000269" key="5">
    <source>
    </source>
</evidence>
<evidence type="ECO:0000269" key="6">
    <source>
    </source>
</evidence>
<evidence type="ECO:0000269" key="7">
    <source>
    </source>
</evidence>
<evidence type="ECO:0000269" key="8">
    <source>
    </source>
</evidence>
<evidence type="ECO:0000269" key="9">
    <source>
    </source>
</evidence>
<evidence type="ECO:0000269" key="10">
    <source>
    </source>
</evidence>
<evidence type="ECO:0000305" key="11">
    <source>
    </source>
</evidence>
<evidence type="ECO:0007744" key="12">
    <source>
    </source>
</evidence>
<feature type="chain" id="PRO_0000046807" description="Transcriptional activator/repressor MOT3">
    <location>
        <begin position="1"/>
        <end position="490"/>
    </location>
</feature>
<feature type="zinc finger region" description="C2H2-type 1" evidence="2">
    <location>
        <begin position="346"/>
        <end position="368"/>
    </location>
</feature>
<feature type="zinc finger region" description="C2H2-type 2" evidence="2">
    <location>
        <begin position="374"/>
        <end position="397"/>
    </location>
</feature>
<feature type="region of interest" description="Disordered" evidence="3">
    <location>
        <begin position="1"/>
        <end position="69"/>
    </location>
</feature>
<feature type="region of interest" description="Prion domain (PrD)">
    <location>
        <begin position="98"/>
        <end position="295"/>
    </location>
</feature>
<feature type="region of interest" description="Disordered" evidence="3">
    <location>
        <begin position="101"/>
        <end position="162"/>
    </location>
</feature>
<feature type="region of interest" description="Disordered" evidence="3">
    <location>
        <begin position="214"/>
        <end position="267"/>
    </location>
</feature>
<feature type="region of interest" description="Disordered" evidence="3">
    <location>
        <begin position="421"/>
        <end position="458"/>
    </location>
</feature>
<feature type="compositionally biased region" description="Low complexity" evidence="3">
    <location>
        <begin position="8"/>
        <end position="36"/>
    </location>
</feature>
<feature type="compositionally biased region" description="Polar residues" evidence="3">
    <location>
        <begin position="37"/>
        <end position="65"/>
    </location>
</feature>
<feature type="compositionally biased region" description="Low complexity" evidence="3">
    <location>
        <begin position="119"/>
        <end position="128"/>
    </location>
</feature>
<feature type="compositionally biased region" description="Low complexity" evidence="3">
    <location>
        <begin position="138"/>
        <end position="157"/>
    </location>
</feature>
<feature type="compositionally biased region" description="Low complexity" evidence="3">
    <location>
        <begin position="214"/>
        <end position="232"/>
    </location>
</feature>
<feature type="compositionally biased region" description="Low complexity" evidence="3">
    <location>
        <begin position="248"/>
        <end position="264"/>
    </location>
</feature>
<feature type="compositionally biased region" description="Low complexity" evidence="3">
    <location>
        <begin position="421"/>
        <end position="436"/>
    </location>
</feature>
<feature type="modified residue" description="N-acetylmethionine" evidence="12">
    <location>
        <position position="1"/>
    </location>
</feature>
<sequence>MNADHHLQQQQQQRQQHQQQQHQQQQHQHQHQQQQHTILQNVSNTNNIGSDSLASQPFNTTTVSSNKDDVMVNSGARELPMPLHQQQYIYPYYQYTSNNSNNNNVTAGNNMSASPIVHNNSNNSNNSNISASDYTVANNSTSNNNNNNNNNNNNNNNIHPNQFTAAANMNSNAAAAAYYSFPTANMPIPQQDQQYMFNPASYISHYYSAVNSNNNGNNAANNGSNNSSHSAPAPAPGPPHHHHHHSNTHNNLNNGGAVNTNNAPQHHPTIITDQFQFQLQQNPSPNLNLNINPAQPLHLPPGWKINTMPQPRPTTAPNHPPAPVPSSNPVASNLVPAPSSDHKYIHQCQFCEKSFKRKSWLKRHLLSHSQQRHFLCPWCLSRQKRKDNLLQHMKLKHTNYLLDELKKNNIIFNYNNSSSSNNNNDNNNNNNSNSASGSGGAGAAAAAATAPENEDGNGYDTNIKTLINDGVLNKDDVKRVLNNLIVSHNK</sequence>
<gene>
    <name type="primary">MOT3</name>
    <name type="synonym">ROX7</name>
    <name type="ordered locus">YMR070W</name>
    <name type="ORF">YM9916.09</name>
</gene>
<name>MOT3_YEAST</name>